<protein>
    <recommendedName>
        <fullName evidence="1">COP9/Signalosome and eIF3 complex-shared subunit 1</fullName>
    </recommendedName>
    <alternativeName>
        <fullName evidence="1">COP9 signalosome complex subunit 7</fullName>
        <shortName evidence="1">Signalosome subunit 7</shortName>
    </alternativeName>
    <alternativeName>
        <fullName evidence="1">Eukaryotic translation initiation factor 3 subunit M</fullName>
        <shortName evidence="1">eIF3m</shortName>
    </alternativeName>
</protein>
<accession>Q94261</accession>
<name>EIF3M_CAEEL</name>
<feature type="chain" id="PRO_0000121001" description="COP9/Signalosome and eIF3 complex-shared subunit 1">
    <location>
        <begin position="1"/>
        <end position="390"/>
    </location>
</feature>
<feature type="domain" description="PCI" evidence="2">
    <location>
        <begin position="188"/>
        <end position="351"/>
    </location>
</feature>
<comment type="function">
    <text evidence="1 3">Component of the eukaryotic translation initiation factor 3 (eIF-3) complex, which is involved in protein synthesis of a specialized repertoire of mRNAs and, together with other initiation factors, stimulates binding of mRNA and methionyl-tRNAi to the 40S ribosome. The eIF-3 complex specifically targets and initiates translation of a subset of mRNAs involved in cell proliferation (Potential). Component of the COP9 signalosome complex (CSN), a complex involved in various cellular and developmental processes (PubMed:17403899). The CSN complex is an essential regulator of the ubiquitin (Ubl) conjugation pathway by mediating the deneddylation of the cullin subunits of the SCF-type E3 ligase complexes, leading to decrease the Ubl ligase activity of SCF (PubMed:17403899). The CSN complex plays an essential role in embryogenesis and oogenesis and is required to regulate microtubule stability in the early embryo. Mediates mei-1 targeting for degradation at the meiosis to mitosis transition via deneddylation of cul-3 (PubMed:17403899).</text>
</comment>
<comment type="subunit">
    <text evidence="1 3">Component of the eukaryotic translation initiation factor 3 (eIF-3) complex. Within the eIF-3 complex, interacts directly with eif-3.F. Component of the CSN complex, composed of csn-1, csn-2, csn-3, csn-4, csn-5, csn-6 and csn-7. Within the CSN complex, interacts directly with csn-1 and csn-4.</text>
</comment>
<comment type="interaction">
    <interactant intactId="EBI-318834">
        <id>Q94261</id>
    </interactant>
    <interactant intactId="EBI-331347">
        <id>Q9N359</id>
        <label>csn-4</label>
    </interactant>
    <organismsDiffer>false</organismsDiffer>
    <experiments>3</experiments>
</comment>
<comment type="subcellular location">
    <subcellularLocation>
        <location evidence="1">Cytoplasm</location>
    </subcellularLocation>
</comment>
<comment type="similarity">
    <text evidence="1">Belongs to the eIF-3 subunit M family.</text>
</comment>
<evidence type="ECO:0000255" key="1">
    <source>
        <dbReference type="HAMAP-Rule" id="MF_03012"/>
    </source>
</evidence>
<evidence type="ECO:0000255" key="2">
    <source>
        <dbReference type="PROSITE-ProRule" id="PRU01185"/>
    </source>
</evidence>
<evidence type="ECO:0000269" key="3">
    <source>
    </source>
</evidence>
<gene>
    <name evidence="1" type="primary">cif-1</name>
    <name evidence="1" type="synonym">csn-7</name>
    <name evidence="1" type="synonym">eif-3.M</name>
    <name type="ORF">K08F11.3</name>
</gene>
<keyword id="KW-0963">Cytoplasm</keyword>
<keyword id="KW-0217">Developmental protein</keyword>
<keyword id="KW-0221">Differentiation</keyword>
<keyword id="KW-0903">Direct protein sequencing</keyword>
<keyword id="KW-0396">Initiation factor</keyword>
<keyword id="KW-0896">Oogenesis</keyword>
<keyword id="KW-0648">Protein biosynthesis</keyword>
<keyword id="KW-1185">Reference proteome</keyword>
<keyword id="KW-0736">Signalosome</keyword>
<dbReference type="EMBL" id="FO081041">
    <property type="protein sequence ID" value="CCD68723.1"/>
    <property type="molecule type" value="Genomic_DNA"/>
</dbReference>
<dbReference type="PIR" id="T30020">
    <property type="entry name" value="T30020"/>
</dbReference>
<dbReference type="RefSeq" id="NP_500618.1">
    <property type="nucleotide sequence ID" value="NM_068217.7"/>
</dbReference>
<dbReference type="SMR" id="Q94261"/>
<dbReference type="BioGRID" id="42365">
    <property type="interactions" value="32"/>
</dbReference>
<dbReference type="ComplexPortal" id="CPX-3386">
    <property type="entry name" value="COP9 signalosome complex"/>
</dbReference>
<dbReference type="DIP" id="DIP-27147N"/>
<dbReference type="FunCoup" id="Q94261">
    <property type="interactions" value="2800"/>
</dbReference>
<dbReference type="IntAct" id="Q94261">
    <property type="interactions" value="8"/>
</dbReference>
<dbReference type="STRING" id="6239.K08F11.3.1"/>
<dbReference type="PaxDb" id="6239-K08F11.3.1"/>
<dbReference type="PeptideAtlas" id="Q94261"/>
<dbReference type="EnsemblMetazoa" id="K08F11.3.1">
    <property type="protein sequence ID" value="K08F11.3.1"/>
    <property type="gene ID" value="WBGene00019543"/>
</dbReference>
<dbReference type="EnsemblMetazoa" id="K08F11.3.2">
    <property type="protein sequence ID" value="K08F11.3.2"/>
    <property type="gene ID" value="WBGene00019543"/>
</dbReference>
<dbReference type="GeneID" id="177236"/>
<dbReference type="KEGG" id="cel:CELE_K08F11.3"/>
<dbReference type="UCSC" id="K08F11.3.1">
    <property type="organism name" value="c. elegans"/>
</dbReference>
<dbReference type="AGR" id="WB:WBGene00019543"/>
<dbReference type="CTD" id="177236"/>
<dbReference type="WormBase" id="K08F11.3">
    <property type="protein sequence ID" value="CE11954"/>
    <property type="gene ID" value="WBGene00019543"/>
    <property type="gene designation" value="cif-1"/>
</dbReference>
<dbReference type="eggNOG" id="KOG2753">
    <property type="taxonomic scope" value="Eukaryota"/>
</dbReference>
<dbReference type="GeneTree" id="ENSGT00390000004456"/>
<dbReference type="HOGENOM" id="CLU_035254_1_0_1"/>
<dbReference type="InParanoid" id="Q94261"/>
<dbReference type="OMA" id="VCLKALW"/>
<dbReference type="OrthoDB" id="337870at2759"/>
<dbReference type="PhylomeDB" id="Q94261"/>
<dbReference type="Reactome" id="R-CEL-156827">
    <property type="pathway name" value="L13a-mediated translational silencing of Ceruloplasmin expression"/>
</dbReference>
<dbReference type="Reactome" id="R-CEL-72649">
    <property type="pathway name" value="Translation initiation complex formation"/>
</dbReference>
<dbReference type="Reactome" id="R-CEL-72689">
    <property type="pathway name" value="Formation of a pool of free 40S subunits"/>
</dbReference>
<dbReference type="Reactome" id="R-CEL-72695">
    <property type="pathway name" value="Formation of the ternary complex, and subsequently, the 43S complex"/>
</dbReference>
<dbReference type="Reactome" id="R-CEL-72702">
    <property type="pathway name" value="Ribosomal scanning and start codon recognition"/>
</dbReference>
<dbReference type="PRO" id="PR:Q94261"/>
<dbReference type="Proteomes" id="UP000001940">
    <property type="component" value="Chromosome IV"/>
</dbReference>
<dbReference type="Bgee" id="WBGene00019543">
    <property type="expression patterns" value="Expressed in germ line (C elegans) and 4 other cell types or tissues"/>
</dbReference>
<dbReference type="GO" id="GO:0008180">
    <property type="term" value="C:COP9 signalosome"/>
    <property type="evidence" value="ECO:0000353"/>
    <property type="project" value="ComplexPortal"/>
</dbReference>
<dbReference type="GO" id="GO:0005737">
    <property type="term" value="C:cytoplasm"/>
    <property type="evidence" value="ECO:0000303"/>
    <property type="project" value="ComplexPortal"/>
</dbReference>
<dbReference type="GO" id="GO:0016282">
    <property type="term" value="C:eukaryotic 43S preinitiation complex"/>
    <property type="evidence" value="ECO:0007669"/>
    <property type="project" value="UniProtKB-UniRule"/>
</dbReference>
<dbReference type="GO" id="GO:0033290">
    <property type="term" value="C:eukaryotic 48S preinitiation complex"/>
    <property type="evidence" value="ECO:0007669"/>
    <property type="project" value="UniProtKB-UniRule"/>
</dbReference>
<dbReference type="GO" id="GO:0005852">
    <property type="term" value="C:eukaryotic translation initiation factor 3 complex"/>
    <property type="evidence" value="ECO:0000318"/>
    <property type="project" value="GO_Central"/>
</dbReference>
<dbReference type="GO" id="GO:0071541">
    <property type="term" value="C:eukaryotic translation initiation factor 3 complex, eIF3m"/>
    <property type="evidence" value="ECO:0007669"/>
    <property type="project" value="UniProtKB-UniRule"/>
</dbReference>
<dbReference type="GO" id="GO:0005634">
    <property type="term" value="C:nucleus"/>
    <property type="evidence" value="ECO:0000303"/>
    <property type="project" value="ComplexPortal"/>
</dbReference>
<dbReference type="GO" id="GO:0003743">
    <property type="term" value="F:translation initiation factor activity"/>
    <property type="evidence" value="ECO:0007669"/>
    <property type="project" value="UniProtKB-UniRule"/>
</dbReference>
<dbReference type="GO" id="GO:0060184">
    <property type="term" value="P:cell cycle switching"/>
    <property type="evidence" value="ECO:0000315"/>
    <property type="project" value="ComplexPortal"/>
</dbReference>
<dbReference type="GO" id="GO:0002183">
    <property type="term" value="P:cytoplasmic translational initiation"/>
    <property type="evidence" value="ECO:0000318"/>
    <property type="project" value="GO_Central"/>
</dbReference>
<dbReference type="GO" id="GO:0001732">
    <property type="term" value="P:formation of cytoplasmic translation initiation complex"/>
    <property type="evidence" value="ECO:0007669"/>
    <property type="project" value="UniProtKB-UniRule"/>
</dbReference>
<dbReference type="GO" id="GO:0048477">
    <property type="term" value="P:oogenesis"/>
    <property type="evidence" value="ECO:0007669"/>
    <property type="project" value="UniProtKB-KW"/>
</dbReference>
<dbReference type="GO" id="GO:0000338">
    <property type="term" value="P:protein deneddylation"/>
    <property type="evidence" value="ECO:0007669"/>
    <property type="project" value="UniProtKB-UniRule"/>
</dbReference>
<dbReference type="GO" id="GO:1905879">
    <property type="term" value="P:regulation of oogenesis"/>
    <property type="evidence" value="ECO:0000315"/>
    <property type="project" value="ComplexPortal"/>
</dbReference>
<dbReference type="HAMAP" id="MF_03012">
    <property type="entry name" value="eIF3m"/>
    <property type="match status" value="1"/>
</dbReference>
<dbReference type="InterPro" id="IPR045237">
    <property type="entry name" value="COPS7/eIF3m"/>
</dbReference>
<dbReference type="InterPro" id="IPR027528">
    <property type="entry name" value="eIF3m"/>
</dbReference>
<dbReference type="InterPro" id="IPR000717">
    <property type="entry name" value="PCI_dom"/>
</dbReference>
<dbReference type="PANTHER" id="PTHR15350">
    <property type="entry name" value="COP9 SIGNALOSOME COMPLEX SUBUNIT 7/DENDRITIC CELL PROTEIN GA17"/>
    <property type="match status" value="1"/>
</dbReference>
<dbReference type="PANTHER" id="PTHR15350:SF2">
    <property type="entry name" value="EUKARYOTIC TRANSLATION INITIATION FACTOR 3 SUBUNIT M"/>
    <property type="match status" value="1"/>
</dbReference>
<dbReference type="Pfam" id="PF01399">
    <property type="entry name" value="PCI"/>
    <property type="match status" value="1"/>
</dbReference>
<dbReference type="SMART" id="SM00088">
    <property type="entry name" value="PINT"/>
    <property type="match status" value="1"/>
</dbReference>
<dbReference type="PROSITE" id="PS50250">
    <property type="entry name" value="PCI"/>
    <property type="match status" value="1"/>
</dbReference>
<sequence length="390" mass="44084">MADTRELPVFAYIDDVKQLQELRQYLNKHDSVKLDPNGPSETAQNMIEICSTLNVLPSWSQDVDLVLNSISSLIVVVPGEKCEPVVDSFIKNVAPQFYKGTGWASHAGIAVRVLSNLYKGYSNFHTVQEKIFKALVDMCAEARLIGELECNLETLQDRFNTWKTPVEGQREILRAVHRALLVDQRVDQAAKVMTALLGTYTEKDAAAARDDAMECVRTAVVDPKSFSFDHLERLSAVKALKTSDPLMFTALELFISGTLKDYKEFVAKNPKFVTEHLKVDETILLKKIRLLTLMSLAEEKNEISLDELAKQLDILADETLEEFVIDAIQVNAISGKINEMARTLIVSSYQHRRFGTEQWVLLEKRLKVLIANLKQTHNNVHEVNQRIEAL</sequence>
<organism>
    <name type="scientific">Caenorhabditis elegans</name>
    <dbReference type="NCBI Taxonomy" id="6239"/>
    <lineage>
        <taxon>Eukaryota</taxon>
        <taxon>Metazoa</taxon>
        <taxon>Ecdysozoa</taxon>
        <taxon>Nematoda</taxon>
        <taxon>Chromadorea</taxon>
        <taxon>Rhabditida</taxon>
        <taxon>Rhabditina</taxon>
        <taxon>Rhabditomorpha</taxon>
        <taxon>Rhabditoidea</taxon>
        <taxon>Rhabditidae</taxon>
        <taxon>Peloderinae</taxon>
        <taxon>Caenorhabditis</taxon>
    </lineage>
</organism>
<proteinExistence type="evidence at protein level"/>
<reference key="1">
    <citation type="journal article" date="1998" name="Science">
        <title>Genome sequence of the nematode C. elegans: a platform for investigating biology.</title>
        <authorList>
            <consortium name="The C. elegans sequencing consortium"/>
        </authorList>
    </citation>
    <scope>NUCLEOTIDE SEQUENCE [LARGE SCALE GENOMIC DNA]</scope>
    <source>
        <strain>Bristol N2</strain>
    </source>
</reference>
<reference key="2">
    <citation type="journal article" date="2007" name="Mol. Cell. Biol.">
        <title>CIF-1, a shared subunit of the COP9/signalosome and eukaryotic initiation factor 3 complexes, regulates MEL-26 levels in the Caenorhabditis elegans embryo.</title>
        <authorList>
            <person name="Luke-Glaser S."/>
            <person name="Roy M."/>
            <person name="Larsen B."/>
            <person name="Le Bihan T."/>
            <person name="Metalnikov P."/>
            <person name="Tyers M."/>
            <person name="Peter M."/>
            <person name="Pintard L."/>
        </authorList>
    </citation>
    <scope>PROTEIN SEQUENCE OF 242-260</scope>
    <scope>IDENTIFICATION IN THE CSN COMPLEX AND IN THE EIF-3 COMPLEX</scope>
    <scope>IDENTIFICATION BY MASS SPECTROMETRY</scope>
    <scope>FUNCTION</scope>
    <scope>INTERACTION WITH CSN-1; CSN-4 AND EIF-3.F</scope>
</reference>
<reference key="3">
    <citation type="journal article" date="2003" name="Curr. Biol.">
        <title>Neddylation and deneddylation of CUL-3 is required to target MEI-1/katanin for degradation at the meiosis-to-mitosis transition in C. elegans.</title>
        <authorList>
            <person name="Pintard L."/>
            <person name="Kurz T."/>
            <person name="Glaser S."/>
            <person name="Willis J.H."/>
            <person name="Peter M."/>
            <person name="Bowerman B."/>
        </authorList>
    </citation>
    <scope>IDENTIFICATION</scope>
</reference>